<comment type="function">
    <text evidence="1">Inhibits the vertebrate voltage-gated potassium channels Kv1.1/KCNA1 and Kv1.3/KCNA3.</text>
</comment>
<comment type="subcellular location">
    <subcellularLocation>
        <location evidence="5">Secreted</location>
    </subcellularLocation>
</comment>
<comment type="tissue specificity">
    <text evidence="5">Expressed by the venom duct.</text>
</comment>
<comment type="domain">
    <text evidence="4">The cysteine framework is XI (C-C-CC-CC-C-C).</text>
</comment>
<comment type="similarity">
    <text evidence="4">Belongs to the conotoxin I2 superfamily.</text>
</comment>
<dbReference type="EMBL" id="GQ180865">
    <property type="protein sequence ID" value="ACU30727.1"/>
    <property type="molecule type" value="mRNA"/>
</dbReference>
<dbReference type="GO" id="GO:0005576">
    <property type="term" value="C:extracellular region"/>
    <property type="evidence" value="ECO:0007669"/>
    <property type="project" value="UniProtKB-SubCell"/>
</dbReference>
<dbReference type="GO" id="GO:0015459">
    <property type="term" value="F:potassium channel regulator activity"/>
    <property type="evidence" value="ECO:0007669"/>
    <property type="project" value="UniProtKB-KW"/>
</dbReference>
<dbReference type="GO" id="GO:0090729">
    <property type="term" value="F:toxin activity"/>
    <property type="evidence" value="ECO:0007669"/>
    <property type="project" value="UniProtKB-KW"/>
</dbReference>
<dbReference type="InterPro" id="IPR013141">
    <property type="entry name" value="Conotoxin-I_CS"/>
</dbReference>
<dbReference type="InterPro" id="IPR020242">
    <property type="entry name" value="Conotoxin_I2"/>
</dbReference>
<dbReference type="Pfam" id="PF17557">
    <property type="entry name" value="Conotoxin_I2"/>
    <property type="match status" value="1"/>
</dbReference>
<dbReference type="PROSITE" id="PS60019">
    <property type="entry name" value="I_CONOTOXIN"/>
    <property type="match status" value="1"/>
</dbReference>
<name>I2B8_CONEM</name>
<keyword id="KW-0027">Amidation</keyword>
<keyword id="KW-0165">Cleavage on pair of basic residues</keyword>
<keyword id="KW-1015">Disulfide bond</keyword>
<keyword id="KW-0872">Ion channel impairing toxin</keyword>
<keyword id="KW-0528">Neurotoxin</keyword>
<keyword id="KW-0632">Potassium channel impairing toxin</keyword>
<keyword id="KW-0964">Secreted</keyword>
<keyword id="KW-0732">Signal</keyword>
<keyword id="KW-0800">Toxin</keyword>
<keyword id="KW-1220">Voltage-gated potassium channel impairing toxin</keyword>
<proteinExistence type="inferred from homology"/>
<protein>
    <recommendedName>
        <fullName evidence="3">Kappa-conotoxin-like Em11.8</fullName>
    </recommendedName>
</protein>
<organism>
    <name type="scientific">Conus emaciatus</name>
    <name type="common">False virgin cone</name>
    <dbReference type="NCBI Taxonomy" id="89442"/>
    <lineage>
        <taxon>Eukaryota</taxon>
        <taxon>Metazoa</taxon>
        <taxon>Spiralia</taxon>
        <taxon>Lophotrochozoa</taxon>
        <taxon>Mollusca</taxon>
        <taxon>Gastropoda</taxon>
        <taxon>Caenogastropoda</taxon>
        <taxon>Neogastropoda</taxon>
        <taxon>Conoidea</taxon>
        <taxon>Conidae</taxon>
        <taxon>Conus</taxon>
        <taxon>Virgiconus</taxon>
    </lineage>
</organism>
<reference key="1">
    <citation type="journal article" date="2009" name="Peptides">
        <title>Identification of novel I-superfamily conopeptides from several clades of Conus species found in the South China Sea.</title>
        <authorList>
            <person name="Liu Z."/>
            <person name="Xu N."/>
            <person name="Hu J."/>
            <person name="Zhao C."/>
            <person name="Yu Z."/>
            <person name="Dai Q."/>
        </authorList>
    </citation>
    <scope>NUCLEOTIDE SEQUENCE [MRNA]</scope>
    <source>
        <tissue>Venom duct</tissue>
    </source>
</reference>
<sequence>MMFRLTSVSCFLLVIACLNLFQVVLTSRCFPPGIYCTPYLPCCWGICCGTCRNVCHLRFGKRATFQE</sequence>
<evidence type="ECO:0000250" key="1"/>
<evidence type="ECO:0000250" key="2">
    <source>
        <dbReference type="UniProtKB" id="Q7Z094"/>
    </source>
</evidence>
<evidence type="ECO:0000303" key="3">
    <source>
    </source>
</evidence>
<evidence type="ECO:0000305" key="4"/>
<evidence type="ECO:0000305" key="5">
    <source>
    </source>
</evidence>
<feature type="signal peptide" evidence="1">
    <location>
        <begin position="1"/>
        <end position="26"/>
    </location>
</feature>
<feature type="peptide" id="PRO_0000392049" description="Kappa-conotoxin-like Em11.8">
    <location>
        <begin position="27"/>
        <end position="59"/>
    </location>
</feature>
<feature type="propeptide" id="PRO_0000392050" evidence="1">
    <location>
        <begin position="63"/>
        <end position="67"/>
    </location>
</feature>
<feature type="modified residue" description="Phenylalanine amide" evidence="1">
    <location>
        <position position="59"/>
    </location>
</feature>
<feature type="disulfide bond" evidence="2">
    <location>
        <begin position="29"/>
        <end position="43"/>
    </location>
</feature>
<feature type="disulfide bond" evidence="2">
    <location>
        <begin position="36"/>
        <end position="48"/>
    </location>
</feature>
<feature type="disulfide bond" evidence="2">
    <location>
        <begin position="42"/>
        <end position="51"/>
    </location>
</feature>
<feature type="disulfide bond" evidence="2">
    <location>
        <begin position="47"/>
        <end position="55"/>
    </location>
</feature>
<accession>C7DQB7</accession>